<protein>
    <recommendedName>
        <fullName>G-type lectin S-receptor-like serine/threonine-protein kinase At5g35370</fullName>
        <ecNumber>2.7.11.1</ecNumber>
    </recommendedName>
</protein>
<comment type="catalytic activity">
    <reaction>
        <text>L-seryl-[protein] + ATP = O-phospho-L-seryl-[protein] + ADP + H(+)</text>
        <dbReference type="Rhea" id="RHEA:17989"/>
        <dbReference type="Rhea" id="RHEA-COMP:9863"/>
        <dbReference type="Rhea" id="RHEA-COMP:11604"/>
        <dbReference type="ChEBI" id="CHEBI:15378"/>
        <dbReference type="ChEBI" id="CHEBI:29999"/>
        <dbReference type="ChEBI" id="CHEBI:30616"/>
        <dbReference type="ChEBI" id="CHEBI:83421"/>
        <dbReference type="ChEBI" id="CHEBI:456216"/>
        <dbReference type="EC" id="2.7.11.1"/>
    </reaction>
</comment>
<comment type="catalytic activity">
    <reaction>
        <text>L-threonyl-[protein] + ATP = O-phospho-L-threonyl-[protein] + ADP + H(+)</text>
        <dbReference type="Rhea" id="RHEA:46608"/>
        <dbReference type="Rhea" id="RHEA-COMP:11060"/>
        <dbReference type="Rhea" id="RHEA-COMP:11605"/>
        <dbReference type="ChEBI" id="CHEBI:15378"/>
        <dbReference type="ChEBI" id="CHEBI:30013"/>
        <dbReference type="ChEBI" id="CHEBI:30616"/>
        <dbReference type="ChEBI" id="CHEBI:61977"/>
        <dbReference type="ChEBI" id="CHEBI:456216"/>
        <dbReference type="EC" id="2.7.11.1"/>
    </reaction>
</comment>
<comment type="subcellular location">
    <subcellularLocation>
        <location evidence="1">Cell membrane</location>
        <topology evidence="1">Single-pass type I membrane protein</topology>
    </subcellularLocation>
</comment>
<comment type="similarity">
    <text evidence="5">Belongs to the protein kinase superfamily. Ser/Thr protein kinase family.</text>
</comment>
<comment type="sequence caution" evidence="8">
    <conflict type="erroneous gene model prediction">
        <sequence resource="EMBL-CDS" id="AAC13608"/>
    </conflict>
</comment>
<comment type="sequence caution" evidence="8">
    <conflict type="erroneous gene model prediction">
        <sequence resource="EMBL-CDS" id="BAB11487"/>
    </conflict>
</comment>
<comment type="sequence caution" evidence="8">
    <conflict type="miscellaneous discrepancy">
        <sequence resource="EMBL-CDS" id="BAE98939"/>
    </conflict>
    <text>Sequencing errors.</text>
</comment>
<organism>
    <name type="scientific">Arabidopsis thaliana</name>
    <name type="common">Mouse-ear cress</name>
    <dbReference type="NCBI Taxonomy" id="3702"/>
    <lineage>
        <taxon>Eukaryota</taxon>
        <taxon>Viridiplantae</taxon>
        <taxon>Streptophyta</taxon>
        <taxon>Embryophyta</taxon>
        <taxon>Tracheophyta</taxon>
        <taxon>Spermatophyta</taxon>
        <taxon>Magnoliopsida</taxon>
        <taxon>eudicotyledons</taxon>
        <taxon>Gunneridae</taxon>
        <taxon>Pentapetalae</taxon>
        <taxon>rosids</taxon>
        <taxon>malvids</taxon>
        <taxon>Brassicales</taxon>
        <taxon>Brassicaceae</taxon>
        <taxon>Camelineae</taxon>
        <taxon>Arabidopsis</taxon>
    </lineage>
</organism>
<proteinExistence type="evidence at transcript level"/>
<accession>O65238</accession>
<accession>Q0WL86</accession>
<accession>Q0WVA9</accession>
<accession>Q9FZP3</accession>
<feature type="signal peptide" evidence="3">
    <location>
        <begin position="1"/>
        <end position="26"/>
    </location>
</feature>
<feature type="chain" id="PRO_0000401331" description="G-type lectin S-receptor-like serine/threonine-protein kinase At5g35370">
    <location>
        <begin position="27"/>
        <end position="872"/>
    </location>
</feature>
<feature type="topological domain" description="Extracellular" evidence="3">
    <location>
        <begin position="27"/>
        <end position="443"/>
    </location>
</feature>
<feature type="transmembrane region" description="Helical" evidence="3">
    <location>
        <begin position="444"/>
        <end position="464"/>
    </location>
</feature>
<feature type="topological domain" description="Cytoplasmic" evidence="3">
    <location>
        <begin position="465"/>
        <end position="872"/>
    </location>
</feature>
<feature type="domain" description="Bulb-type lectin" evidence="4">
    <location>
        <begin position="35"/>
        <end position="156"/>
    </location>
</feature>
<feature type="domain" description="EGF-like; atypical">
    <location>
        <begin position="283"/>
        <end position="322"/>
    </location>
</feature>
<feature type="domain" description="PAN">
    <location>
        <begin position="338"/>
        <end position="423"/>
    </location>
</feature>
<feature type="domain" description="Protein kinase" evidence="5">
    <location>
        <begin position="515"/>
        <end position="814"/>
    </location>
</feature>
<feature type="region of interest" description="CaM-binding" evidence="1">
    <location>
        <begin position="603"/>
        <end position="620"/>
    </location>
</feature>
<feature type="region of interest" description="Disordered" evidence="7">
    <location>
        <begin position="836"/>
        <end position="872"/>
    </location>
</feature>
<feature type="compositionally biased region" description="Low complexity" evidence="7">
    <location>
        <begin position="851"/>
        <end position="861"/>
    </location>
</feature>
<feature type="compositionally biased region" description="Polar residues" evidence="7">
    <location>
        <begin position="862"/>
        <end position="872"/>
    </location>
</feature>
<feature type="active site" description="Proton acceptor" evidence="5 6">
    <location>
        <position position="639"/>
    </location>
</feature>
<feature type="binding site" evidence="5">
    <location>
        <begin position="521"/>
        <end position="529"/>
    </location>
    <ligand>
        <name>ATP</name>
        <dbReference type="ChEBI" id="CHEBI:30616"/>
    </ligand>
</feature>
<feature type="binding site" evidence="5">
    <location>
        <position position="543"/>
    </location>
    <ligand>
        <name>ATP</name>
        <dbReference type="ChEBI" id="CHEBI:30616"/>
    </ligand>
</feature>
<feature type="modified residue" description="Phosphoserine" evidence="2">
    <location>
        <position position="656"/>
    </location>
</feature>
<feature type="modified residue" description="Phosphothreonine" evidence="2">
    <location>
        <position position="673"/>
    </location>
</feature>
<feature type="modified residue" description="Phosphoserine" evidence="2">
    <location>
        <position position="716"/>
    </location>
</feature>
<feature type="modified residue" description="Phosphoserine" evidence="2">
    <location>
        <position position="859"/>
    </location>
</feature>
<feature type="glycosylation site" description="N-linked (GlcNAc...) asparagine" evidence="3">
    <location>
        <position position="33"/>
    </location>
</feature>
<feature type="glycosylation site" description="N-linked (GlcNAc...) asparagine" evidence="3">
    <location>
        <position position="148"/>
    </location>
</feature>
<feature type="glycosylation site" description="N-linked (GlcNAc...) asparagine" evidence="3">
    <location>
        <position position="239"/>
    </location>
</feature>
<feature type="glycosylation site" description="N-linked (GlcNAc...) asparagine" evidence="3">
    <location>
        <position position="303"/>
    </location>
</feature>
<feature type="glycosylation site" description="N-linked (GlcNAc...) asparagine" evidence="3">
    <location>
        <position position="307"/>
    </location>
</feature>
<feature type="glycosylation site" description="N-linked (GlcNAc...) asparagine" evidence="3">
    <location>
        <position position="342"/>
    </location>
</feature>
<feature type="glycosylation site" description="N-linked (GlcNAc...) asparagine" evidence="3">
    <location>
        <position position="379"/>
    </location>
</feature>
<feature type="glycosylation site" description="N-linked (GlcNAc...) asparagine" evidence="3">
    <location>
        <position position="389"/>
    </location>
</feature>
<feature type="disulfide bond" evidence="4">
    <location>
        <begin position="287"/>
        <end position="299"/>
    </location>
</feature>
<feature type="disulfide bond" evidence="4">
    <location>
        <begin position="293"/>
        <end position="310"/>
    </location>
</feature>
<feature type="disulfide bond" evidence="4">
    <location>
        <begin position="372"/>
        <end position="394"/>
    </location>
</feature>
<feature type="disulfide bond" evidence="4">
    <location>
        <begin position="376"/>
        <end position="382"/>
    </location>
</feature>
<name>Y5537_ARATH</name>
<evidence type="ECO:0000250" key="1"/>
<evidence type="ECO:0000250" key="2">
    <source>
        <dbReference type="UniProtKB" id="Q9LPZ9"/>
    </source>
</evidence>
<evidence type="ECO:0000255" key="3"/>
<evidence type="ECO:0000255" key="4">
    <source>
        <dbReference type="PROSITE-ProRule" id="PRU00038"/>
    </source>
</evidence>
<evidence type="ECO:0000255" key="5">
    <source>
        <dbReference type="PROSITE-ProRule" id="PRU00159"/>
    </source>
</evidence>
<evidence type="ECO:0000255" key="6">
    <source>
        <dbReference type="PROSITE-ProRule" id="PRU10027"/>
    </source>
</evidence>
<evidence type="ECO:0000256" key="7">
    <source>
        <dbReference type="SAM" id="MobiDB-lite"/>
    </source>
</evidence>
<evidence type="ECO:0000305" key="8"/>
<reference key="1">
    <citation type="submission" date="1999-04" db="EMBL/GenBank/DDBJ databases">
        <title>Structural analysis of Arabidopsis thaliana chromosome 5. XI.</title>
        <authorList>
            <person name="Kaneko T."/>
            <person name="Katoh T."/>
            <person name="Asamizu E."/>
            <person name="Sato S."/>
            <person name="Nakamura Y."/>
            <person name="Kotani H."/>
            <person name="Tabata S."/>
        </authorList>
    </citation>
    <scope>NUCLEOTIDE SEQUENCE [LARGE SCALE GENOMIC DNA]</scope>
    <source>
        <strain>cv. Columbia</strain>
    </source>
</reference>
<reference key="2">
    <citation type="journal article" date="2000" name="Nature">
        <title>Sequence and analysis of chromosome 5 of the plant Arabidopsis thaliana.</title>
        <authorList>
            <person name="Tabata S."/>
            <person name="Kaneko T."/>
            <person name="Nakamura Y."/>
            <person name="Kotani H."/>
            <person name="Kato T."/>
            <person name="Asamizu E."/>
            <person name="Miyajima N."/>
            <person name="Sasamoto S."/>
            <person name="Kimura T."/>
            <person name="Hosouchi T."/>
            <person name="Kawashima K."/>
            <person name="Kohara M."/>
            <person name="Matsumoto M."/>
            <person name="Matsuno A."/>
            <person name="Muraki A."/>
            <person name="Nakayama S."/>
            <person name="Nakazaki N."/>
            <person name="Naruo K."/>
            <person name="Okumura S."/>
            <person name="Shinpo S."/>
            <person name="Takeuchi C."/>
            <person name="Wada T."/>
            <person name="Watanabe A."/>
            <person name="Yamada M."/>
            <person name="Yasuda M."/>
            <person name="Sato S."/>
            <person name="de la Bastide M."/>
            <person name="Huang E."/>
            <person name="Spiegel L."/>
            <person name="Gnoj L."/>
            <person name="O'Shaughnessy A."/>
            <person name="Preston R."/>
            <person name="Habermann K."/>
            <person name="Murray J."/>
            <person name="Johnson D."/>
            <person name="Rohlfing T."/>
            <person name="Nelson J."/>
            <person name="Stoneking T."/>
            <person name="Pepin K."/>
            <person name="Spieth J."/>
            <person name="Sekhon M."/>
            <person name="Armstrong J."/>
            <person name="Becker M."/>
            <person name="Belter E."/>
            <person name="Cordum H."/>
            <person name="Cordes M."/>
            <person name="Courtney L."/>
            <person name="Courtney W."/>
            <person name="Dante M."/>
            <person name="Du H."/>
            <person name="Edwards J."/>
            <person name="Fryman J."/>
            <person name="Haakensen B."/>
            <person name="Lamar E."/>
            <person name="Latreille P."/>
            <person name="Leonard S."/>
            <person name="Meyer R."/>
            <person name="Mulvaney E."/>
            <person name="Ozersky P."/>
            <person name="Riley A."/>
            <person name="Strowmatt C."/>
            <person name="Wagner-McPherson C."/>
            <person name="Wollam A."/>
            <person name="Yoakum M."/>
            <person name="Bell M."/>
            <person name="Dedhia N."/>
            <person name="Parnell L."/>
            <person name="Shah R."/>
            <person name="Rodriguez M."/>
            <person name="Hoon See L."/>
            <person name="Vil D."/>
            <person name="Baker J."/>
            <person name="Kirchoff K."/>
            <person name="Toth K."/>
            <person name="King L."/>
            <person name="Bahret A."/>
            <person name="Miller B."/>
            <person name="Marra M.A."/>
            <person name="Martienssen R."/>
            <person name="McCombie W.R."/>
            <person name="Wilson R.K."/>
            <person name="Murphy G."/>
            <person name="Bancroft I."/>
            <person name="Volckaert G."/>
            <person name="Wambutt R."/>
            <person name="Duesterhoeft A."/>
            <person name="Stiekema W."/>
            <person name="Pohl T."/>
            <person name="Entian K.-D."/>
            <person name="Terryn N."/>
            <person name="Hartley N."/>
            <person name="Bent E."/>
            <person name="Johnson S."/>
            <person name="Langham S.-A."/>
            <person name="McCullagh B."/>
            <person name="Robben J."/>
            <person name="Grymonprez B."/>
            <person name="Zimmermann W."/>
            <person name="Ramsperger U."/>
            <person name="Wedler H."/>
            <person name="Balke K."/>
            <person name="Wedler E."/>
            <person name="Peters S."/>
            <person name="van Staveren M."/>
            <person name="Dirkse W."/>
            <person name="Mooijman P."/>
            <person name="Klein Lankhorst R."/>
            <person name="Weitzenegger T."/>
            <person name="Bothe G."/>
            <person name="Rose M."/>
            <person name="Hauf J."/>
            <person name="Berneiser S."/>
            <person name="Hempel S."/>
            <person name="Feldpausch M."/>
            <person name="Lamberth S."/>
            <person name="Villarroel R."/>
            <person name="Gielen J."/>
            <person name="Ardiles W."/>
            <person name="Bents O."/>
            <person name="Lemcke K."/>
            <person name="Kolesov G."/>
            <person name="Mayer K.F.X."/>
            <person name="Rudd S."/>
            <person name="Schoof H."/>
            <person name="Schueller C."/>
            <person name="Zaccaria P."/>
            <person name="Mewes H.-W."/>
            <person name="Bevan M."/>
            <person name="Fransz P.F."/>
        </authorList>
    </citation>
    <scope>NUCLEOTIDE SEQUENCE [LARGE SCALE GENOMIC DNA]</scope>
    <source>
        <strain>cv. Columbia</strain>
    </source>
</reference>
<reference key="3">
    <citation type="journal article" date="2017" name="Plant J.">
        <title>Araport11: a complete reannotation of the Arabidopsis thaliana reference genome.</title>
        <authorList>
            <person name="Cheng C.Y."/>
            <person name="Krishnakumar V."/>
            <person name="Chan A.P."/>
            <person name="Thibaud-Nissen F."/>
            <person name="Schobel S."/>
            <person name="Town C.D."/>
        </authorList>
    </citation>
    <scope>GENOME REANNOTATION</scope>
    <source>
        <strain>cv. Columbia</strain>
    </source>
</reference>
<reference key="4">
    <citation type="submission" date="2006-07" db="EMBL/GenBank/DDBJ databases">
        <title>Large-scale analysis of RIKEN Arabidopsis full-length (RAFL) cDNAs.</title>
        <authorList>
            <person name="Totoki Y."/>
            <person name="Seki M."/>
            <person name="Ishida J."/>
            <person name="Nakajima M."/>
            <person name="Enju A."/>
            <person name="Kamiya A."/>
            <person name="Narusaka M."/>
            <person name="Shin-i T."/>
            <person name="Nakagawa M."/>
            <person name="Sakamoto N."/>
            <person name="Oishi K."/>
            <person name="Kohara Y."/>
            <person name="Kobayashi M."/>
            <person name="Toyoda A."/>
            <person name="Sakaki Y."/>
            <person name="Sakurai T."/>
            <person name="Iida K."/>
            <person name="Akiyama K."/>
            <person name="Satou M."/>
            <person name="Toyoda T."/>
            <person name="Konagaya A."/>
            <person name="Carninci P."/>
            <person name="Kawai J."/>
            <person name="Hayashizaki Y."/>
            <person name="Shinozaki K."/>
        </authorList>
    </citation>
    <scope>NUCLEOTIDE SEQUENCE [LARGE SCALE MRNA]</scope>
    <source>
        <strain>cv. Columbia</strain>
    </source>
</reference>
<dbReference type="EC" id="2.7.11.1"/>
<dbReference type="EMBL" id="AB025636">
    <property type="protein sequence ID" value="BAB11487.1"/>
    <property type="status" value="ALT_SEQ"/>
    <property type="molecule type" value="Genomic_DNA"/>
</dbReference>
<dbReference type="EMBL" id="AF058826">
    <property type="protein sequence ID" value="AAC13608.1"/>
    <property type="status" value="ALT_SEQ"/>
    <property type="molecule type" value="Genomic_DNA"/>
</dbReference>
<dbReference type="EMBL" id="CP002688">
    <property type="protein sequence ID" value="AED93959.1"/>
    <property type="molecule type" value="Genomic_DNA"/>
</dbReference>
<dbReference type="EMBL" id="AK226846">
    <property type="protein sequence ID" value="BAE98939.1"/>
    <property type="status" value="ALT_SEQ"/>
    <property type="molecule type" value="mRNA"/>
</dbReference>
<dbReference type="EMBL" id="AK230321">
    <property type="protein sequence ID" value="BAF02121.1"/>
    <property type="molecule type" value="mRNA"/>
</dbReference>
<dbReference type="PIR" id="T01181">
    <property type="entry name" value="T01181"/>
</dbReference>
<dbReference type="RefSeq" id="NP_198387.2">
    <property type="nucleotide sequence ID" value="NM_122928.3"/>
</dbReference>
<dbReference type="SMR" id="O65238"/>
<dbReference type="FunCoup" id="O65238">
    <property type="interactions" value="327"/>
</dbReference>
<dbReference type="STRING" id="3702.O65238"/>
<dbReference type="GlyGen" id="O65238">
    <property type="glycosylation" value="8 sites"/>
</dbReference>
<dbReference type="PaxDb" id="3702-AT5G35370.1"/>
<dbReference type="ProteomicsDB" id="242835"/>
<dbReference type="EnsemblPlants" id="AT5G35370.1">
    <property type="protein sequence ID" value="AT5G35370.1"/>
    <property type="gene ID" value="AT5G35370"/>
</dbReference>
<dbReference type="GeneID" id="833498"/>
<dbReference type="Gramene" id="AT5G35370.1">
    <property type="protein sequence ID" value="AT5G35370.1"/>
    <property type="gene ID" value="AT5G35370"/>
</dbReference>
<dbReference type="KEGG" id="ath:AT5G35370"/>
<dbReference type="Araport" id="AT5G35370"/>
<dbReference type="TAIR" id="AT5G35370"/>
<dbReference type="eggNOG" id="ENOG502QU6U">
    <property type="taxonomic scope" value="Eukaryota"/>
</dbReference>
<dbReference type="HOGENOM" id="CLU_000288_116_2_1"/>
<dbReference type="InParanoid" id="O65238"/>
<dbReference type="OMA" id="SRSCYLV"/>
<dbReference type="PhylomeDB" id="O65238"/>
<dbReference type="PRO" id="PR:O65238"/>
<dbReference type="Proteomes" id="UP000006548">
    <property type="component" value="Chromosome 5"/>
</dbReference>
<dbReference type="ExpressionAtlas" id="O65238">
    <property type="expression patterns" value="baseline and differential"/>
</dbReference>
<dbReference type="GO" id="GO:0005886">
    <property type="term" value="C:plasma membrane"/>
    <property type="evidence" value="ECO:0007669"/>
    <property type="project" value="UniProtKB-SubCell"/>
</dbReference>
<dbReference type="GO" id="GO:0005524">
    <property type="term" value="F:ATP binding"/>
    <property type="evidence" value="ECO:0007669"/>
    <property type="project" value="UniProtKB-KW"/>
</dbReference>
<dbReference type="GO" id="GO:0005516">
    <property type="term" value="F:calmodulin binding"/>
    <property type="evidence" value="ECO:0000250"/>
    <property type="project" value="UniProtKB"/>
</dbReference>
<dbReference type="GO" id="GO:0030246">
    <property type="term" value="F:carbohydrate binding"/>
    <property type="evidence" value="ECO:0007669"/>
    <property type="project" value="UniProtKB-KW"/>
</dbReference>
<dbReference type="GO" id="GO:0106310">
    <property type="term" value="F:protein serine kinase activity"/>
    <property type="evidence" value="ECO:0007669"/>
    <property type="project" value="RHEA"/>
</dbReference>
<dbReference type="GO" id="GO:0004674">
    <property type="term" value="F:protein serine/threonine kinase activity"/>
    <property type="evidence" value="ECO:0000250"/>
    <property type="project" value="UniProtKB"/>
</dbReference>
<dbReference type="GO" id="GO:0031625">
    <property type="term" value="F:ubiquitin protein ligase binding"/>
    <property type="evidence" value="ECO:0007669"/>
    <property type="project" value="UniProtKB-ARBA"/>
</dbReference>
<dbReference type="CDD" id="cd00028">
    <property type="entry name" value="B_lectin"/>
    <property type="match status" value="1"/>
</dbReference>
<dbReference type="CDD" id="cd14066">
    <property type="entry name" value="STKc_IRAK"/>
    <property type="match status" value="1"/>
</dbReference>
<dbReference type="FunFam" id="1.10.510.10:FF:000589">
    <property type="entry name" value="Serine/threonine-protein kinase"/>
    <property type="match status" value="1"/>
</dbReference>
<dbReference type="FunFam" id="3.30.200.20:FF:000178">
    <property type="entry name" value="serine/threonine-protein kinase PBS1-like"/>
    <property type="match status" value="1"/>
</dbReference>
<dbReference type="Gene3D" id="2.90.10.30">
    <property type="match status" value="1"/>
</dbReference>
<dbReference type="Gene3D" id="3.30.200.20">
    <property type="entry name" value="Phosphorylase Kinase, domain 1"/>
    <property type="match status" value="1"/>
</dbReference>
<dbReference type="Gene3D" id="1.10.510.10">
    <property type="entry name" value="Transferase(Phosphotransferase) domain 1"/>
    <property type="match status" value="1"/>
</dbReference>
<dbReference type="InterPro" id="IPR001480">
    <property type="entry name" value="Bulb-type_lectin_dom"/>
</dbReference>
<dbReference type="InterPro" id="IPR036426">
    <property type="entry name" value="Bulb-type_lectin_dom_sf"/>
</dbReference>
<dbReference type="InterPro" id="IPR011009">
    <property type="entry name" value="Kinase-like_dom_sf"/>
</dbReference>
<dbReference type="InterPro" id="IPR000719">
    <property type="entry name" value="Prot_kinase_dom"/>
</dbReference>
<dbReference type="InterPro" id="IPR017441">
    <property type="entry name" value="Protein_kinase_ATP_BS"/>
</dbReference>
<dbReference type="InterPro" id="IPR008271">
    <property type="entry name" value="Ser/Thr_kinase_AS"/>
</dbReference>
<dbReference type="InterPro" id="IPR024171">
    <property type="entry name" value="SRK-like_kinase"/>
</dbReference>
<dbReference type="PANTHER" id="PTHR47974">
    <property type="entry name" value="OS07G0415500 PROTEIN"/>
    <property type="match status" value="1"/>
</dbReference>
<dbReference type="PANTHER" id="PTHR47974:SF27">
    <property type="entry name" value="RECEPTOR-LIKE SERINE_THREONINE-PROTEIN KINASE"/>
    <property type="match status" value="1"/>
</dbReference>
<dbReference type="Pfam" id="PF01453">
    <property type="entry name" value="B_lectin"/>
    <property type="match status" value="1"/>
</dbReference>
<dbReference type="Pfam" id="PF00069">
    <property type="entry name" value="Pkinase"/>
    <property type="match status" value="1"/>
</dbReference>
<dbReference type="PIRSF" id="PIRSF000641">
    <property type="entry name" value="SRK"/>
    <property type="match status" value="1"/>
</dbReference>
<dbReference type="SMART" id="SM00108">
    <property type="entry name" value="B_lectin"/>
    <property type="match status" value="1"/>
</dbReference>
<dbReference type="SMART" id="SM00220">
    <property type="entry name" value="S_TKc"/>
    <property type="match status" value="1"/>
</dbReference>
<dbReference type="SUPFAM" id="SSF51110">
    <property type="entry name" value="alpha-D-mannose-specific plant lectins"/>
    <property type="match status" value="1"/>
</dbReference>
<dbReference type="SUPFAM" id="SSF56112">
    <property type="entry name" value="Protein kinase-like (PK-like)"/>
    <property type="match status" value="1"/>
</dbReference>
<dbReference type="PROSITE" id="PS50927">
    <property type="entry name" value="BULB_LECTIN"/>
    <property type="match status" value="1"/>
</dbReference>
<dbReference type="PROSITE" id="PS00107">
    <property type="entry name" value="PROTEIN_KINASE_ATP"/>
    <property type="match status" value="1"/>
</dbReference>
<dbReference type="PROSITE" id="PS50011">
    <property type="entry name" value="PROTEIN_KINASE_DOM"/>
    <property type="match status" value="1"/>
</dbReference>
<dbReference type="PROSITE" id="PS00108">
    <property type="entry name" value="PROTEIN_KINASE_ST"/>
    <property type="match status" value="1"/>
</dbReference>
<gene>
    <name type="ordered locus">At5g35370</name>
    <name type="ORF">T26D22.12</name>
</gene>
<sequence length="872" mass="96046">MKSTFLLLLLLLSLNLLFVFVSCASSIEFVYPNFTASNLRFVDSSKGAFLLSRNSIFKAGLFSPGGDDSSTGFYFSVVHVDSGSTIWSSNRDSPVSSSGTMNLTPQGISVIEDGKSQIPVWSTPVLASPVKSLRLTDAGNLLLLDHLNVSLWESFDFPTDSIVLGQRLKLGMFLSGSVSRSDFSTGDYKFLVGESDGLMQWRGQNYWKLRMHIRANVDSNFPVEYLTVTTSGLALMARNGTVVVVRVALPPSSDFRVAKMDSSGKFIVSRFSGKNLVTEFSGPMDSCQIPFVCGKLGLCNLDNASENQSCSCPDEMRMDAGKGVCVPVSQSLSLPVSCEARNISYLELGLGVSYFSTHFTDPVEHGLPLLACHDICSKNCSCLGVFYENTSRSCYLVKDSFGSLSLVKNSPENHDLIGYVKLSIRKTNAQPPGNNNRGGSSFPVIALVLLPCSGFFLLIALGLLWWRRCAVMRYSSIREKQVTRPGSFESGDLGSFHIPGLPQKFEFEELEQATENFKMQIGSGGFGSVYKGTLPDETLIAVKKITNHGLHGRQEFCTEIAIIGNIRHTNLVKLRGFCARGRQLLLVYEYMNHGSLEKTLFSGNGPVLEWQERFDIALGTARGLAYLHSGCDQKIIHCDVKPENILLHDHFQPKISDFGLSKLLNQEESSLFTTMRGTRGYLAPEWITNAAISEKADVYSYGMVLLELVSGRKNCSFRSRSNSVTEDNNQNHSSTTTTSTGLVYFPLYALDMHEQGRYMELADPRLEGRVTSQEAEKLVRIALCCVHEEPALRPTMAAVVGMFEGSIPLGNPRMESLNFLRFYGLRFAESSMVEGQNGESETMVFHRRESSNSGGSRQSASYIASQEVSGPR</sequence>
<keyword id="KW-0067">ATP-binding</keyword>
<keyword id="KW-1003">Cell membrane</keyword>
<keyword id="KW-1015">Disulfide bond</keyword>
<keyword id="KW-0245">EGF-like domain</keyword>
<keyword id="KW-0325">Glycoprotein</keyword>
<keyword id="KW-0418">Kinase</keyword>
<keyword id="KW-0430">Lectin</keyword>
<keyword id="KW-0472">Membrane</keyword>
<keyword id="KW-0547">Nucleotide-binding</keyword>
<keyword id="KW-0597">Phosphoprotein</keyword>
<keyword id="KW-0675">Receptor</keyword>
<keyword id="KW-1185">Reference proteome</keyword>
<keyword id="KW-0723">Serine/threonine-protein kinase</keyword>
<keyword id="KW-0732">Signal</keyword>
<keyword id="KW-0808">Transferase</keyword>
<keyword id="KW-0812">Transmembrane</keyword>
<keyword id="KW-1133">Transmembrane helix</keyword>